<reference key="1">
    <citation type="journal article" date="2006" name="Nat. Genet.">
        <title>The multidrug-resistant human pathogen Clostridium difficile has a highly mobile, mosaic genome.</title>
        <authorList>
            <person name="Sebaihia M."/>
            <person name="Wren B.W."/>
            <person name="Mullany P."/>
            <person name="Fairweather N.F."/>
            <person name="Minton N."/>
            <person name="Stabler R."/>
            <person name="Thomson N.R."/>
            <person name="Roberts A.P."/>
            <person name="Cerdeno-Tarraga A.M."/>
            <person name="Wang H."/>
            <person name="Holden M.T.G."/>
            <person name="Wright A."/>
            <person name="Churcher C."/>
            <person name="Quail M.A."/>
            <person name="Baker S."/>
            <person name="Bason N."/>
            <person name="Brooks K."/>
            <person name="Chillingworth T."/>
            <person name="Cronin A."/>
            <person name="Davis P."/>
            <person name="Dowd L."/>
            <person name="Fraser A."/>
            <person name="Feltwell T."/>
            <person name="Hance Z."/>
            <person name="Holroyd S."/>
            <person name="Jagels K."/>
            <person name="Moule S."/>
            <person name="Mungall K."/>
            <person name="Price C."/>
            <person name="Rabbinowitsch E."/>
            <person name="Sharp S."/>
            <person name="Simmonds M."/>
            <person name="Stevens K."/>
            <person name="Unwin L."/>
            <person name="Whithead S."/>
            <person name="Dupuy B."/>
            <person name="Dougan G."/>
            <person name="Barrell B."/>
            <person name="Parkhill J."/>
        </authorList>
    </citation>
    <scope>NUCLEOTIDE SEQUENCE [LARGE SCALE GENOMIC DNA]</scope>
    <source>
        <strain>630</strain>
    </source>
</reference>
<protein>
    <recommendedName>
        <fullName evidence="1">Ribonuclease HII</fullName>
        <shortName evidence="1">RNase HII</shortName>
        <ecNumber evidence="1">3.1.26.4</ecNumber>
    </recommendedName>
</protein>
<feature type="chain" id="PRO_0000334882" description="Ribonuclease HII">
    <location>
        <begin position="1"/>
        <end position="255"/>
    </location>
</feature>
<feature type="domain" description="RNase H type-2" evidence="2">
    <location>
        <begin position="73"/>
        <end position="255"/>
    </location>
</feature>
<feature type="binding site" evidence="1">
    <location>
        <position position="79"/>
    </location>
    <ligand>
        <name>a divalent metal cation</name>
        <dbReference type="ChEBI" id="CHEBI:60240"/>
    </ligand>
</feature>
<feature type="binding site" evidence="1">
    <location>
        <position position="80"/>
    </location>
    <ligand>
        <name>a divalent metal cation</name>
        <dbReference type="ChEBI" id="CHEBI:60240"/>
    </ligand>
</feature>
<feature type="binding site" evidence="1">
    <location>
        <position position="171"/>
    </location>
    <ligand>
        <name>a divalent metal cation</name>
        <dbReference type="ChEBI" id="CHEBI:60240"/>
    </ligand>
</feature>
<proteinExistence type="inferred from homology"/>
<accession>Q18BC9</accession>
<name>RNH2_CLOD6</name>
<gene>
    <name evidence="1" type="primary">rnhB</name>
    <name type="ordered locus">CD630_12620</name>
</gene>
<organism>
    <name type="scientific">Clostridioides difficile (strain 630)</name>
    <name type="common">Peptoclostridium difficile</name>
    <dbReference type="NCBI Taxonomy" id="272563"/>
    <lineage>
        <taxon>Bacteria</taxon>
        <taxon>Bacillati</taxon>
        <taxon>Bacillota</taxon>
        <taxon>Clostridia</taxon>
        <taxon>Peptostreptococcales</taxon>
        <taxon>Peptostreptococcaceae</taxon>
        <taxon>Clostridioides</taxon>
    </lineage>
</organism>
<dbReference type="EC" id="3.1.26.4" evidence="1"/>
<dbReference type="EMBL" id="AM180355">
    <property type="protein sequence ID" value="CAJ68118.1"/>
    <property type="molecule type" value="Genomic_DNA"/>
</dbReference>
<dbReference type="RefSeq" id="WP_003438239.1">
    <property type="nucleotide sequence ID" value="NZ_JAUPES010000027.1"/>
</dbReference>
<dbReference type="RefSeq" id="YP_001087756.1">
    <property type="nucleotide sequence ID" value="NC_009089.1"/>
</dbReference>
<dbReference type="SMR" id="Q18BC9"/>
<dbReference type="STRING" id="272563.CD630_12620"/>
<dbReference type="EnsemblBacteria" id="CAJ68118">
    <property type="protein sequence ID" value="CAJ68118"/>
    <property type="gene ID" value="CD630_12620"/>
</dbReference>
<dbReference type="KEGG" id="cdf:CD630_12620"/>
<dbReference type="KEGG" id="pdc:CDIF630_01415"/>
<dbReference type="PATRIC" id="fig|272563.120.peg.1320"/>
<dbReference type="eggNOG" id="COG0164">
    <property type="taxonomic scope" value="Bacteria"/>
</dbReference>
<dbReference type="OrthoDB" id="9803420at2"/>
<dbReference type="PhylomeDB" id="Q18BC9"/>
<dbReference type="BioCyc" id="PDIF272563:G12WB-1396-MONOMER"/>
<dbReference type="Proteomes" id="UP000001978">
    <property type="component" value="Chromosome"/>
</dbReference>
<dbReference type="GO" id="GO:0005737">
    <property type="term" value="C:cytoplasm"/>
    <property type="evidence" value="ECO:0007669"/>
    <property type="project" value="UniProtKB-SubCell"/>
</dbReference>
<dbReference type="GO" id="GO:0032299">
    <property type="term" value="C:ribonuclease H2 complex"/>
    <property type="evidence" value="ECO:0007669"/>
    <property type="project" value="TreeGrafter"/>
</dbReference>
<dbReference type="GO" id="GO:0030145">
    <property type="term" value="F:manganese ion binding"/>
    <property type="evidence" value="ECO:0007669"/>
    <property type="project" value="UniProtKB-UniRule"/>
</dbReference>
<dbReference type="GO" id="GO:0003723">
    <property type="term" value="F:RNA binding"/>
    <property type="evidence" value="ECO:0007669"/>
    <property type="project" value="InterPro"/>
</dbReference>
<dbReference type="GO" id="GO:0004523">
    <property type="term" value="F:RNA-DNA hybrid ribonuclease activity"/>
    <property type="evidence" value="ECO:0007669"/>
    <property type="project" value="UniProtKB-UniRule"/>
</dbReference>
<dbReference type="GO" id="GO:0043137">
    <property type="term" value="P:DNA replication, removal of RNA primer"/>
    <property type="evidence" value="ECO:0007669"/>
    <property type="project" value="TreeGrafter"/>
</dbReference>
<dbReference type="GO" id="GO:0006298">
    <property type="term" value="P:mismatch repair"/>
    <property type="evidence" value="ECO:0007669"/>
    <property type="project" value="TreeGrafter"/>
</dbReference>
<dbReference type="CDD" id="cd07182">
    <property type="entry name" value="RNase_HII_bacteria_HII_like"/>
    <property type="match status" value="1"/>
</dbReference>
<dbReference type="FunFam" id="3.30.420.10:FF:000006">
    <property type="entry name" value="Ribonuclease HII"/>
    <property type="match status" value="1"/>
</dbReference>
<dbReference type="Gene3D" id="3.30.420.10">
    <property type="entry name" value="Ribonuclease H-like superfamily/Ribonuclease H"/>
    <property type="match status" value="1"/>
</dbReference>
<dbReference type="HAMAP" id="MF_00052_B">
    <property type="entry name" value="RNase_HII_B"/>
    <property type="match status" value="1"/>
</dbReference>
<dbReference type="InterPro" id="IPR022898">
    <property type="entry name" value="RNase_HII"/>
</dbReference>
<dbReference type="InterPro" id="IPR001352">
    <property type="entry name" value="RNase_HII/HIII"/>
</dbReference>
<dbReference type="InterPro" id="IPR024567">
    <property type="entry name" value="RNase_HII/HIII_dom"/>
</dbReference>
<dbReference type="InterPro" id="IPR012337">
    <property type="entry name" value="RNaseH-like_sf"/>
</dbReference>
<dbReference type="InterPro" id="IPR036397">
    <property type="entry name" value="RNaseH_sf"/>
</dbReference>
<dbReference type="NCBIfam" id="NF000594">
    <property type="entry name" value="PRK00015.1-1"/>
    <property type="match status" value="1"/>
</dbReference>
<dbReference type="NCBIfam" id="NF000595">
    <property type="entry name" value="PRK00015.1-3"/>
    <property type="match status" value="1"/>
</dbReference>
<dbReference type="PANTHER" id="PTHR10954">
    <property type="entry name" value="RIBONUCLEASE H2 SUBUNIT A"/>
    <property type="match status" value="1"/>
</dbReference>
<dbReference type="PANTHER" id="PTHR10954:SF18">
    <property type="entry name" value="RIBONUCLEASE HII"/>
    <property type="match status" value="1"/>
</dbReference>
<dbReference type="Pfam" id="PF01351">
    <property type="entry name" value="RNase_HII"/>
    <property type="match status" value="1"/>
</dbReference>
<dbReference type="SUPFAM" id="SSF53098">
    <property type="entry name" value="Ribonuclease H-like"/>
    <property type="match status" value="1"/>
</dbReference>
<dbReference type="PROSITE" id="PS51975">
    <property type="entry name" value="RNASE_H_2"/>
    <property type="match status" value="1"/>
</dbReference>
<evidence type="ECO:0000255" key="1">
    <source>
        <dbReference type="HAMAP-Rule" id="MF_00052"/>
    </source>
</evidence>
<evidence type="ECO:0000255" key="2">
    <source>
        <dbReference type="PROSITE-ProRule" id="PRU01319"/>
    </source>
</evidence>
<sequence length="255" mass="28910">MQDKSVREIKEIIETLEVEKYMEYIELLRVDERKSVQGLAIKLAKKLDNIRKEEERLETINIFENEGYDKGYLYIGGIDEAGRGPLAGPVVASVVVFKKDTKIEGVNDSKKLSEAKRDELFEVIKEEALDYGIGIVNNEEIDEFNILNATYMAMKKAINCLKKAPDYLLVDAATIPGIDISQNPIVKGDSKSISIAAASILAKVTRDSIMYQYDRVYPEYGFKSHKGYGTKEHYEAIEKYGITPIHRKSFLKNIL</sequence>
<keyword id="KW-0963">Cytoplasm</keyword>
<keyword id="KW-0255">Endonuclease</keyword>
<keyword id="KW-0378">Hydrolase</keyword>
<keyword id="KW-0464">Manganese</keyword>
<keyword id="KW-0479">Metal-binding</keyword>
<keyword id="KW-0540">Nuclease</keyword>
<keyword id="KW-1185">Reference proteome</keyword>
<comment type="function">
    <text evidence="1">Endonuclease that specifically degrades the RNA of RNA-DNA hybrids.</text>
</comment>
<comment type="catalytic activity">
    <reaction evidence="1">
        <text>Endonucleolytic cleavage to 5'-phosphomonoester.</text>
        <dbReference type="EC" id="3.1.26.4"/>
    </reaction>
</comment>
<comment type="cofactor">
    <cofactor evidence="1">
        <name>Mn(2+)</name>
        <dbReference type="ChEBI" id="CHEBI:29035"/>
    </cofactor>
    <cofactor evidence="1">
        <name>Mg(2+)</name>
        <dbReference type="ChEBI" id="CHEBI:18420"/>
    </cofactor>
    <text evidence="1">Manganese or magnesium. Binds 1 divalent metal ion per monomer in the absence of substrate. May bind a second metal ion after substrate binding.</text>
</comment>
<comment type="subcellular location">
    <subcellularLocation>
        <location evidence="1">Cytoplasm</location>
    </subcellularLocation>
</comment>
<comment type="similarity">
    <text evidence="1">Belongs to the RNase HII family.</text>
</comment>